<name>GATC_EXISA</name>
<proteinExistence type="inferred from homology"/>
<protein>
    <recommendedName>
        <fullName evidence="1">Aspartyl/glutamyl-tRNA(Asn/Gln) amidotransferase subunit C</fullName>
        <shortName evidence="1">Asp/Glu-ADT subunit C</shortName>
        <ecNumber evidence="1">6.3.5.-</ecNumber>
    </recommendedName>
</protein>
<keyword id="KW-0067">ATP-binding</keyword>
<keyword id="KW-0436">Ligase</keyword>
<keyword id="KW-0547">Nucleotide-binding</keyword>
<keyword id="KW-0648">Protein biosynthesis</keyword>
<dbReference type="EC" id="6.3.5.-" evidence="1"/>
<dbReference type="EMBL" id="CP001615">
    <property type="protein sequence ID" value="ACQ69922.1"/>
    <property type="molecule type" value="Genomic_DNA"/>
</dbReference>
<dbReference type="RefSeq" id="WP_012727041.1">
    <property type="nucleotide sequence ID" value="NZ_MOEL01000015.1"/>
</dbReference>
<dbReference type="SMR" id="C4L691"/>
<dbReference type="STRING" id="360911.EAT1b_0994"/>
<dbReference type="GeneID" id="94371345"/>
<dbReference type="KEGG" id="eat:EAT1b_0994"/>
<dbReference type="eggNOG" id="COG0721">
    <property type="taxonomic scope" value="Bacteria"/>
</dbReference>
<dbReference type="HOGENOM" id="CLU_105899_6_1_9"/>
<dbReference type="OrthoDB" id="9813938at2"/>
<dbReference type="Proteomes" id="UP000000716">
    <property type="component" value="Chromosome"/>
</dbReference>
<dbReference type="GO" id="GO:0050566">
    <property type="term" value="F:asparaginyl-tRNA synthase (glutamine-hydrolyzing) activity"/>
    <property type="evidence" value="ECO:0007669"/>
    <property type="project" value="RHEA"/>
</dbReference>
<dbReference type="GO" id="GO:0005524">
    <property type="term" value="F:ATP binding"/>
    <property type="evidence" value="ECO:0007669"/>
    <property type="project" value="UniProtKB-KW"/>
</dbReference>
<dbReference type="GO" id="GO:0050567">
    <property type="term" value="F:glutaminyl-tRNA synthase (glutamine-hydrolyzing) activity"/>
    <property type="evidence" value="ECO:0007669"/>
    <property type="project" value="UniProtKB-UniRule"/>
</dbReference>
<dbReference type="GO" id="GO:0070681">
    <property type="term" value="P:glutaminyl-tRNAGln biosynthesis via transamidation"/>
    <property type="evidence" value="ECO:0007669"/>
    <property type="project" value="TreeGrafter"/>
</dbReference>
<dbReference type="GO" id="GO:0006450">
    <property type="term" value="P:regulation of translational fidelity"/>
    <property type="evidence" value="ECO:0007669"/>
    <property type="project" value="InterPro"/>
</dbReference>
<dbReference type="GO" id="GO:0006412">
    <property type="term" value="P:translation"/>
    <property type="evidence" value="ECO:0007669"/>
    <property type="project" value="UniProtKB-UniRule"/>
</dbReference>
<dbReference type="Gene3D" id="1.10.20.60">
    <property type="entry name" value="Glu-tRNAGln amidotransferase C subunit, N-terminal domain"/>
    <property type="match status" value="1"/>
</dbReference>
<dbReference type="HAMAP" id="MF_00122">
    <property type="entry name" value="GatC"/>
    <property type="match status" value="1"/>
</dbReference>
<dbReference type="InterPro" id="IPR036113">
    <property type="entry name" value="Asp/Glu-ADT_sf_sub_c"/>
</dbReference>
<dbReference type="InterPro" id="IPR003837">
    <property type="entry name" value="GatC"/>
</dbReference>
<dbReference type="NCBIfam" id="TIGR00135">
    <property type="entry name" value="gatC"/>
    <property type="match status" value="1"/>
</dbReference>
<dbReference type="PANTHER" id="PTHR15004">
    <property type="entry name" value="GLUTAMYL-TRNA(GLN) AMIDOTRANSFERASE SUBUNIT C, MITOCHONDRIAL"/>
    <property type="match status" value="1"/>
</dbReference>
<dbReference type="PANTHER" id="PTHR15004:SF0">
    <property type="entry name" value="GLUTAMYL-TRNA(GLN) AMIDOTRANSFERASE SUBUNIT C, MITOCHONDRIAL"/>
    <property type="match status" value="1"/>
</dbReference>
<dbReference type="Pfam" id="PF02686">
    <property type="entry name" value="GatC"/>
    <property type="match status" value="1"/>
</dbReference>
<dbReference type="SUPFAM" id="SSF141000">
    <property type="entry name" value="Glu-tRNAGln amidotransferase C subunit"/>
    <property type="match status" value="1"/>
</dbReference>
<evidence type="ECO:0000255" key="1">
    <source>
        <dbReference type="HAMAP-Rule" id="MF_00122"/>
    </source>
</evidence>
<sequence>MARITEAEVRHVAGLARLAITDEEVTHFTEQLTKILEFAEQLDELDTTGVEPTTHALDLKNVLRKDEVRPSLPREEVERMAPDWENGQVRVPAVFE</sequence>
<gene>
    <name evidence="1" type="primary">gatC</name>
    <name type="ordered locus">EAT1b_0994</name>
</gene>
<feature type="chain" id="PRO_1000203070" description="Aspartyl/glutamyl-tRNA(Asn/Gln) amidotransferase subunit C">
    <location>
        <begin position="1"/>
        <end position="96"/>
    </location>
</feature>
<reference key="1">
    <citation type="journal article" date="2011" name="J. Bacteriol.">
        <title>Complete genome sequence of the Thermophilic Bacterium Exiguobacterium sp. AT1b.</title>
        <authorList>
            <person name="Vishnivetskaya T.A."/>
            <person name="Lucas S."/>
            <person name="Copeland A."/>
            <person name="Lapidus A."/>
            <person name="Glavina del Rio T."/>
            <person name="Dalin E."/>
            <person name="Tice H."/>
            <person name="Bruce D.C."/>
            <person name="Goodwin L.A."/>
            <person name="Pitluck S."/>
            <person name="Saunders E."/>
            <person name="Brettin T."/>
            <person name="Detter C."/>
            <person name="Han C."/>
            <person name="Larimer F."/>
            <person name="Land M.L."/>
            <person name="Hauser L.J."/>
            <person name="Kyrpides N.C."/>
            <person name="Ovchinnikova G."/>
            <person name="Kathariou S."/>
            <person name="Ramaley R.F."/>
            <person name="Rodrigues D.F."/>
            <person name="Hendrix C."/>
            <person name="Richardson P."/>
            <person name="Tiedje J.M."/>
        </authorList>
    </citation>
    <scope>NUCLEOTIDE SEQUENCE [LARGE SCALE GENOMIC DNA]</scope>
    <source>
        <strain>ATCC BAA-1283 / AT1b</strain>
    </source>
</reference>
<organism>
    <name type="scientific">Exiguobacterium sp. (strain ATCC BAA-1283 / AT1b)</name>
    <dbReference type="NCBI Taxonomy" id="360911"/>
    <lineage>
        <taxon>Bacteria</taxon>
        <taxon>Bacillati</taxon>
        <taxon>Bacillota</taxon>
        <taxon>Bacilli</taxon>
        <taxon>Bacillales</taxon>
        <taxon>Bacillales Family XII. Incertae Sedis</taxon>
        <taxon>Exiguobacterium</taxon>
    </lineage>
</organism>
<accession>C4L691</accession>
<comment type="function">
    <text evidence="1">Allows the formation of correctly charged Asn-tRNA(Asn) or Gln-tRNA(Gln) through the transamidation of misacylated Asp-tRNA(Asn) or Glu-tRNA(Gln) in organisms which lack either or both of asparaginyl-tRNA or glutaminyl-tRNA synthetases. The reaction takes place in the presence of glutamine and ATP through an activated phospho-Asp-tRNA(Asn) or phospho-Glu-tRNA(Gln).</text>
</comment>
<comment type="catalytic activity">
    <reaction evidence="1">
        <text>L-glutamyl-tRNA(Gln) + L-glutamine + ATP + H2O = L-glutaminyl-tRNA(Gln) + L-glutamate + ADP + phosphate + H(+)</text>
        <dbReference type="Rhea" id="RHEA:17521"/>
        <dbReference type="Rhea" id="RHEA-COMP:9681"/>
        <dbReference type="Rhea" id="RHEA-COMP:9684"/>
        <dbReference type="ChEBI" id="CHEBI:15377"/>
        <dbReference type="ChEBI" id="CHEBI:15378"/>
        <dbReference type="ChEBI" id="CHEBI:29985"/>
        <dbReference type="ChEBI" id="CHEBI:30616"/>
        <dbReference type="ChEBI" id="CHEBI:43474"/>
        <dbReference type="ChEBI" id="CHEBI:58359"/>
        <dbReference type="ChEBI" id="CHEBI:78520"/>
        <dbReference type="ChEBI" id="CHEBI:78521"/>
        <dbReference type="ChEBI" id="CHEBI:456216"/>
    </reaction>
</comment>
<comment type="catalytic activity">
    <reaction evidence="1">
        <text>L-aspartyl-tRNA(Asn) + L-glutamine + ATP + H2O = L-asparaginyl-tRNA(Asn) + L-glutamate + ADP + phosphate + 2 H(+)</text>
        <dbReference type="Rhea" id="RHEA:14513"/>
        <dbReference type="Rhea" id="RHEA-COMP:9674"/>
        <dbReference type="Rhea" id="RHEA-COMP:9677"/>
        <dbReference type="ChEBI" id="CHEBI:15377"/>
        <dbReference type="ChEBI" id="CHEBI:15378"/>
        <dbReference type="ChEBI" id="CHEBI:29985"/>
        <dbReference type="ChEBI" id="CHEBI:30616"/>
        <dbReference type="ChEBI" id="CHEBI:43474"/>
        <dbReference type="ChEBI" id="CHEBI:58359"/>
        <dbReference type="ChEBI" id="CHEBI:78515"/>
        <dbReference type="ChEBI" id="CHEBI:78516"/>
        <dbReference type="ChEBI" id="CHEBI:456216"/>
    </reaction>
</comment>
<comment type="subunit">
    <text evidence="1">Heterotrimer of A, B and C subunits.</text>
</comment>
<comment type="similarity">
    <text evidence="1">Belongs to the GatC family.</text>
</comment>